<sequence length="177" mass="18538">MAELATIARPYAEALFRAAPKGEAAGWAEQVAALGAVAADPVLRQFADSPKVAAQQVFDLVAGVTKQTLVPGVQNLLRAMIENGRLSALPEVAAQFHALVNASSGVSDAIVYSAFPIEPAALADLVATLEKRFGRRLSATVQLEPELIGGVRVVVGDEVLDTSVKARLEHMKVALTA</sequence>
<organism>
    <name type="scientific">Methylibium petroleiphilum (strain ATCC BAA-1232 / LMG 22953 / PM1)</name>
    <dbReference type="NCBI Taxonomy" id="420662"/>
    <lineage>
        <taxon>Bacteria</taxon>
        <taxon>Pseudomonadati</taxon>
        <taxon>Pseudomonadota</taxon>
        <taxon>Betaproteobacteria</taxon>
        <taxon>Burkholderiales</taxon>
        <taxon>Sphaerotilaceae</taxon>
        <taxon>Methylibium</taxon>
    </lineage>
</organism>
<comment type="function">
    <text evidence="1">F(1)F(0) ATP synthase produces ATP from ADP in the presence of a proton or sodium gradient. F-type ATPases consist of two structural domains, F(1) containing the extramembraneous catalytic core and F(0) containing the membrane proton channel, linked together by a central stalk and a peripheral stalk. During catalysis, ATP synthesis in the catalytic domain of F(1) is coupled via a rotary mechanism of the central stalk subunits to proton translocation.</text>
</comment>
<comment type="function">
    <text evidence="1">This protein is part of the stalk that links CF(0) to CF(1). It either transmits conformational changes from CF(0) to CF(1) or is implicated in proton conduction.</text>
</comment>
<comment type="subunit">
    <text evidence="1">F-type ATPases have 2 components, F(1) - the catalytic core - and F(0) - the membrane proton channel. F(1) has five subunits: alpha(3), beta(3), gamma(1), delta(1), epsilon(1). CF(0) has four main subunits: a(1), b(1), b'(1) and c(10-14). The alpha and beta chains form an alternating ring which encloses part of the gamma chain. F(1) is attached to F(0) by a central stalk formed by the gamma and epsilon chains, while a peripheral stalk is formed by the delta, b and b' chains.</text>
</comment>
<comment type="subcellular location">
    <subcellularLocation>
        <location evidence="1">Cell inner membrane</location>
        <topology evidence="1">Peripheral membrane protein</topology>
    </subcellularLocation>
</comment>
<comment type="similarity">
    <text evidence="1">Belongs to the ATPase delta chain family.</text>
</comment>
<gene>
    <name evidence="1" type="primary">atpH</name>
    <name type="ordered locus">Mpe_A0194</name>
</gene>
<protein>
    <recommendedName>
        <fullName evidence="1">ATP synthase subunit delta</fullName>
    </recommendedName>
    <alternativeName>
        <fullName evidence="1">ATP synthase F(1) sector subunit delta</fullName>
    </alternativeName>
    <alternativeName>
        <fullName evidence="1">F-type ATPase subunit delta</fullName>
        <shortName evidence="1">F-ATPase subunit delta</shortName>
    </alternativeName>
</protein>
<evidence type="ECO:0000255" key="1">
    <source>
        <dbReference type="HAMAP-Rule" id="MF_01416"/>
    </source>
</evidence>
<name>ATPD_METPP</name>
<accession>A2SC67</accession>
<feature type="chain" id="PRO_1000184753" description="ATP synthase subunit delta">
    <location>
        <begin position="1"/>
        <end position="177"/>
    </location>
</feature>
<proteinExistence type="inferred from homology"/>
<keyword id="KW-0066">ATP synthesis</keyword>
<keyword id="KW-0997">Cell inner membrane</keyword>
<keyword id="KW-1003">Cell membrane</keyword>
<keyword id="KW-0139">CF(1)</keyword>
<keyword id="KW-0375">Hydrogen ion transport</keyword>
<keyword id="KW-0406">Ion transport</keyword>
<keyword id="KW-0472">Membrane</keyword>
<keyword id="KW-1185">Reference proteome</keyword>
<keyword id="KW-0813">Transport</keyword>
<dbReference type="EMBL" id="CP000555">
    <property type="protein sequence ID" value="ABM93156.1"/>
    <property type="molecule type" value="Genomic_DNA"/>
</dbReference>
<dbReference type="RefSeq" id="WP_011827795.1">
    <property type="nucleotide sequence ID" value="NC_008825.1"/>
</dbReference>
<dbReference type="SMR" id="A2SC67"/>
<dbReference type="STRING" id="420662.Mpe_A0194"/>
<dbReference type="KEGG" id="mpt:Mpe_A0194"/>
<dbReference type="eggNOG" id="COG0712">
    <property type="taxonomic scope" value="Bacteria"/>
</dbReference>
<dbReference type="HOGENOM" id="CLU_085114_3_0_4"/>
<dbReference type="Proteomes" id="UP000000366">
    <property type="component" value="Chromosome"/>
</dbReference>
<dbReference type="GO" id="GO:0005886">
    <property type="term" value="C:plasma membrane"/>
    <property type="evidence" value="ECO:0007669"/>
    <property type="project" value="UniProtKB-SubCell"/>
</dbReference>
<dbReference type="GO" id="GO:0045259">
    <property type="term" value="C:proton-transporting ATP synthase complex"/>
    <property type="evidence" value="ECO:0007669"/>
    <property type="project" value="UniProtKB-KW"/>
</dbReference>
<dbReference type="GO" id="GO:0046933">
    <property type="term" value="F:proton-transporting ATP synthase activity, rotational mechanism"/>
    <property type="evidence" value="ECO:0007669"/>
    <property type="project" value="UniProtKB-UniRule"/>
</dbReference>
<dbReference type="Gene3D" id="1.10.520.20">
    <property type="entry name" value="N-terminal domain of the delta subunit of the F1F0-ATP synthase"/>
    <property type="match status" value="1"/>
</dbReference>
<dbReference type="HAMAP" id="MF_01416">
    <property type="entry name" value="ATP_synth_delta_bact"/>
    <property type="match status" value="1"/>
</dbReference>
<dbReference type="InterPro" id="IPR026015">
    <property type="entry name" value="ATP_synth_OSCP/delta_N_sf"/>
</dbReference>
<dbReference type="InterPro" id="IPR000711">
    <property type="entry name" value="ATPase_OSCP/dsu"/>
</dbReference>
<dbReference type="NCBIfam" id="TIGR01145">
    <property type="entry name" value="ATP_synt_delta"/>
    <property type="match status" value="1"/>
</dbReference>
<dbReference type="NCBIfam" id="NF004402">
    <property type="entry name" value="PRK05758.2-2"/>
    <property type="match status" value="1"/>
</dbReference>
<dbReference type="PANTHER" id="PTHR11910">
    <property type="entry name" value="ATP SYNTHASE DELTA CHAIN"/>
    <property type="match status" value="1"/>
</dbReference>
<dbReference type="Pfam" id="PF00213">
    <property type="entry name" value="OSCP"/>
    <property type="match status" value="1"/>
</dbReference>
<dbReference type="PRINTS" id="PR00125">
    <property type="entry name" value="ATPASEDELTA"/>
</dbReference>
<dbReference type="SUPFAM" id="SSF47928">
    <property type="entry name" value="N-terminal domain of the delta subunit of the F1F0-ATP synthase"/>
    <property type="match status" value="1"/>
</dbReference>
<reference key="1">
    <citation type="journal article" date="2007" name="J. Bacteriol.">
        <title>Whole-genome analysis of the methyl tert-butyl ether-degrading beta-proteobacterium Methylibium petroleiphilum PM1.</title>
        <authorList>
            <person name="Kane S.R."/>
            <person name="Chakicherla A.Y."/>
            <person name="Chain P.S.G."/>
            <person name="Schmidt R."/>
            <person name="Shin M.W."/>
            <person name="Legler T.C."/>
            <person name="Scow K.M."/>
            <person name="Larimer F.W."/>
            <person name="Lucas S.M."/>
            <person name="Richardson P.M."/>
            <person name="Hristova K.R."/>
        </authorList>
    </citation>
    <scope>NUCLEOTIDE SEQUENCE [LARGE SCALE GENOMIC DNA]</scope>
    <source>
        <strain>ATCC BAA-1232 / LMG 22953 / PM1</strain>
    </source>
</reference>